<comment type="function">
    <text evidence="1">Catalyzes the hydrolytic deamination of adenosine and 2-deoxyadenosine.</text>
</comment>
<comment type="catalytic activity">
    <reaction evidence="1">
        <text>adenosine + H2O + H(+) = inosine + NH4(+)</text>
        <dbReference type="Rhea" id="RHEA:24408"/>
        <dbReference type="ChEBI" id="CHEBI:15377"/>
        <dbReference type="ChEBI" id="CHEBI:15378"/>
        <dbReference type="ChEBI" id="CHEBI:16335"/>
        <dbReference type="ChEBI" id="CHEBI:17596"/>
        <dbReference type="ChEBI" id="CHEBI:28938"/>
        <dbReference type="EC" id="3.5.4.4"/>
    </reaction>
    <physiologicalReaction direction="left-to-right" evidence="1">
        <dbReference type="Rhea" id="RHEA:24409"/>
    </physiologicalReaction>
</comment>
<comment type="catalytic activity">
    <reaction evidence="1">
        <text>2'-deoxyadenosine + H2O + H(+) = 2'-deoxyinosine + NH4(+)</text>
        <dbReference type="Rhea" id="RHEA:28190"/>
        <dbReference type="ChEBI" id="CHEBI:15377"/>
        <dbReference type="ChEBI" id="CHEBI:15378"/>
        <dbReference type="ChEBI" id="CHEBI:17256"/>
        <dbReference type="ChEBI" id="CHEBI:28938"/>
        <dbReference type="ChEBI" id="CHEBI:28997"/>
        <dbReference type="EC" id="3.5.4.4"/>
    </reaction>
    <physiologicalReaction direction="left-to-right" evidence="1">
        <dbReference type="Rhea" id="RHEA:28191"/>
    </physiologicalReaction>
</comment>
<comment type="cofactor">
    <cofactor evidence="1">
        <name>Zn(2+)</name>
        <dbReference type="ChEBI" id="CHEBI:29105"/>
    </cofactor>
    <text evidence="1">Binds 1 zinc ion per subunit.</text>
</comment>
<comment type="similarity">
    <text evidence="1">Belongs to the metallo-dependent hydrolases superfamily. Adenosine and AMP deaminases family. Adenosine deaminase subfamily.</text>
</comment>
<keyword id="KW-0378">Hydrolase</keyword>
<keyword id="KW-0479">Metal-binding</keyword>
<keyword id="KW-0546">Nucleotide metabolism</keyword>
<keyword id="KW-0862">Zinc</keyword>
<name>ADD_SHEB2</name>
<accession>B8EDT7</accession>
<gene>
    <name evidence="1" type="primary">add</name>
    <name type="ordered locus">Sbal223_4297</name>
</gene>
<dbReference type="EC" id="3.5.4.4" evidence="1"/>
<dbReference type="EMBL" id="CP001252">
    <property type="protein sequence ID" value="ACK48763.1"/>
    <property type="molecule type" value="Genomic_DNA"/>
</dbReference>
<dbReference type="RefSeq" id="WP_012588963.1">
    <property type="nucleotide sequence ID" value="NC_011663.1"/>
</dbReference>
<dbReference type="SMR" id="B8EDT7"/>
<dbReference type="KEGG" id="sbp:Sbal223_4297"/>
<dbReference type="HOGENOM" id="CLU_039228_0_2_6"/>
<dbReference type="Proteomes" id="UP000002507">
    <property type="component" value="Chromosome"/>
</dbReference>
<dbReference type="GO" id="GO:0005829">
    <property type="term" value="C:cytosol"/>
    <property type="evidence" value="ECO:0007669"/>
    <property type="project" value="TreeGrafter"/>
</dbReference>
<dbReference type="GO" id="GO:0046936">
    <property type="term" value="F:2'-deoxyadenosine deaminase activity"/>
    <property type="evidence" value="ECO:0007669"/>
    <property type="project" value="RHEA"/>
</dbReference>
<dbReference type="GO" id="GO:0004000">
    <property type="term" value="F:adenosine deaminase activity"/>
    <property type="evidence" value="ECO:0007669"/>
    <property type="project" value="UniProtKB-UniRule"/>
</dbReference>
<dbReference type="GO" id="GO:0008270">
    <property type="term" value="F:zinc ion binding"/>
    <property type="evidence" value="ECO:0007669"/>
    <property type="project" value="UniProtKB-UniRule"/>
</dbReference>
<dbReference type="GO" id="GO:0006154">
    <property type="term" value="P:adenosine catabolic process"/>
    <property type="evidence" value="ECO:0007669"/>
    <property type="project" value="TreeGrafter"/>
</dbReference>
<dbReference type="GO" id="GO:0043103">
    <property type="term" value="P:hypoxanthine salvage"/>
    <property type="evidence" value="ECO:0007669"/>
    <property type="project" value="TreeGrafter"/>
</dbReference>
<dbReference type="GO" id="GO:0046103">
    <property type="term" value="P:inosine biosynthetic process"/>
    <property type="evidence" value="ECO:0007669"/>
    <property type="project" value="TreeGrafter"/>
</dbReference>
<dbReference type="GO" id="GO:0009117">
    <property type="term" value="P:nucleotide metabolic process"/>
    <property type="evidence" value="ECO:0007669"/>
    <property type="project" value="UniProtKB-KW"/>
</dbReference>
<dbReference type="GO" id="GO:0009168">
    <property type="term" value="P:purine ribonucleoside monophosphate biosynthetic process"/>
    <property type="evidence" value="ECO:0007669"/>
    <property type="project" value="UniProtKB-UniRule"/>
</dbReference>
<dbReference type="FunFam" id="3.20.20.140:FF:000009">
    <property type="entry name" value="Adenosine deaminase"/>
    <property type="match status" value="1"/>
</dbReference>
<dbReference type="Gene3D" id="3.20.20.140">
    <property type="entry name" value="Metal-dependent hydrolases"/>
    <property type="match status" value="1"/>
</dbReference>
<dbReference type="HAMAP" id="MF_00540">
    <property type="entry name" value="A_deaminase"/>
    <property type="match status" value="1"/>
</dbReference>
<dbReference type="InterPro" id="IPR028893">
    <property type="entry name" value="A_deaminase"/>
</dbReference>
<dbReference type="InterPro" id="IPR001365">
    <property type="entry name" value="A_deaminase_dom"/>
</dbReference>
<dbReference type="InterPro" id="IPR006330">
    <property type="entry name" value="Ado/ade_deaminase"/>
</dbReference>
<dbReference type="InterPro" id="IPR032466">
    <property type="entry name" value="Metal_Hydrolase"/>
</dbReference>
<dbReference type="NCBIfam" id="TIGR01430">
    <property type="entry name" value="aden_deam"/>
    <property type="match status" value="1"/>
</dbReference>
<dbReference type="NCBIfam" id="NF006846">
    <property type="entry name" value="PRK09358.1-1"/>
    <property type="match status" value="1"/>
</dbReference>
<dbReference type="PANTHER" id="PTHR11409">
    <property type="entry name" value="ADENOSINE DEAMINASE"/>
    <property type="match status" value="1"/>
</dbReference>
<dbReference type="PANTHER" id="PTHR11409:SF43">
    <property type="entry name" value="ADENOSINE DEAMINASE"/>
    <property type="match status" value="1"/>
</dbReference>
<dbReference type="Pfam" id="PF00962">
    <property type="entry name" value="A_deaminase"/>
    <property type="match status" value="1"/>
</dbReference>
<dbReference type="SUPFAM" id="SSF51556">
    <property type="entry name" value="Metallo-dependent hydrolases"/>
    <property type="match status" value="1"/>
</dbReference>
<organism>
    <name type="scientific">Shewanella baltica (strain OS223)</name>
    <dbReference type="NCBI Taxonomy" id="407976"/>
    <lineage>
        <taxon>Bacteria</taxon>
        <taxon>Pseudomonadati</taxon>
        <taxon>Pseudomonadota</taxon>
        <taxon>Gammaproteobacteria</taxon>
        <taxon>Alteromonadales</taxon>
        <taxon>Shewanellaceae</taxon>
        <taxon>Shewanella</taxon>
    </lineage>
</organism>
<proteinExistence type="inferred from homology"/>
<sequence length="331" mass="36188">MIDTSIPLVDLHRHLDGNVRVNTIWELGHQHGIALPADSLETLAPFVQIQGKETSLVAFLKKLDWMVGVLADLDAVKRVAYENVADAALSGLDYAELRFSPYYMAMNHKLPIEGVVEAVVDGVKAGLKDYNVKINLIGILSRSFGQAACTQELEGLLAHKQHLVAMDLAGDEMGFPGELFNDHFKRVRDADLAITAHAGEAAGSQSMWQAIQELGATRIGHGVNAIHDPKLMEYLAKHRIGIESCPTSNLHTSTVASYAEHPFRTFMDAGVLINLNTDDPGVSAIDINHEYRIAKAELKLTDAELAQVQRNGVEMAFLSDSDRKALYAAKV</sequence>
<feature type="chain" id="PRO_1000146576" description="Adenosine deaminase">
    <location>
        <begin position="1"/>
        <end position="331"/>
    </location>
</feature>
<feature type="active site" description="Proton donor" evidence="1">
    <location>
        <position position="200"/>
    </location>
</feature>
<feature type="binding site" evidence="1">
    <location>
        <position position="12"/>
    </location>
    <ligand>
        <name>Zn(2+)</name>
        <dbReference type="ChEBI" id="CHEBI:29105"/>
        <note>catalytic</note>
    </ligand>
</feature>
<feature type="binding site" evidence="1">
    <location>
        <position position="14"/>
    </location>
    <ligand>
        <name>substrate</name>
    </ligand>
</feature>
<feature type="binding site" evidence="1">
    <location>
        <position position="14"/>
    </location>
    <ligand>
        <name>Zn(2+)</name>
        <dbReference type="ChEBI" id="CHEBI:29105"/>
        <note>catalytic</note>
    </ligand>
</feature>
<feature type="binding site" evidence="1">
    <location>
        <position position="16"/>
    </location>
    <ligand>
        <name>substrate</name>
    </ligand>
</feature>
<feature type="binding site" evidence="1">
    <location>
        <position position="170"/>
    </location>
    <ligand>
        <name>substrate</name>
    </ligand>
</feature>
<feature type="binding site" evidence="1">
    <location>
        <position position="197"/>
    </location>
    <ligand>
        <name>Zn(2+)</name>
        <dbReference type="ChEBI" id="CHEBI:29105"/>
        <note>catalytic</note>
    </ligand>
</feature>
<feature type="binding site" evidence="1">
    <location>
        <position position="278"/>
    </location>
    <ligand>
        <name>Zn(2+)</name>
        <dbReference type="ChEBI" id="CHEBI:29105"/>
        <note>catalytic</note>
    </ligand>
</feature>
<feature type="binding site" evidence="1">
    <location>
        <position position="279"/>
    </location>
    <ligand>
        <name>substrate</name>
    </ligand>
</feature>
<feature type="site" description="Important for catalytic activity" evidence="1">
    <location>
        <position position="221"/>
    </location>
</feature>
<reference key="1">
    <citation type="submission" date="2008-12" db="EMBL/GenBank/DDBJ databases">
        <title>Complete sequence of chromosome of Shewanella baltica OS223.</title>
        <authorList>
            <consortium name="US DOE Joint Genome Institute"/>
            <person name="Lucas S."/>
            <person name="Copeland A."/>
            <person name="Lapidus A."/>
            <person name="Glavina del Rio T."/>
            <person name="Dalin E."/>
            <person name="Tice H."/>
            <person name="Bruce D."/>
            <person name="Goodwin L."/>
            <person name="Pitluck S."/>
            <person name="Chertkov O."/>
            <person name="Meincke L."/>
            <person name="Brettin T."/>
            <person name="Detter J.C."/>
            <person name="Han C."/>
            <person name="Kuske C.R."/>
            <person name="Larimer F."/>
            <person name="Land M."/>
            <person name="Hauser L."/>
            <person name="Kyrpides N."/>
            <person name="Ovchinnikova G."/>
            <person name="Brettar I."/>
            <person name="Rodrigues J."/>
            <person name="Konstantinidis K."/>
            <person name="Tiedje J."/>
        </authorList>
    </citation>
    <scope>NUCLEOTIDE SEQUENCE [LARGE SCALE GENOMIC DNA]</scope>
    <source>
        <strain>OS223</strain>
    </source>
</reference>
<evidence type="ECO:0000255" key="1">
    <source>
        <dbReference type="HAMAP-Rule" id="MF_00540"/>
    </source>
</evidence>
<protein>
    <recommendedName>
        <fullName evidence="1">Adenosine deaminase</fullName>
        <ecNumber evidence="1">3.5.4.4</ecNumber>
    </recommendedName>
    <alternativeName>
        <fullName evidence="1">Adenosine aminohydrolase</fullName>
    </alternativeName>
</protein>